<protein>
    <recommendedName>
        <fullName>Formyl-CoA:oxalate CoA-transferase</fullName>
        <shortName>FCOCT</shortName>
        <ecNumber evidence="2">2.8.3.16</ecNumber>
    </recommendedName>
    <alternativeName>
        <fullName evidence="2">Formyl-coenzyme A transferase</fullName>
        <shortName evidence="2">Formyl-CoA transferase</shortName>
    </alternativeName>
</protein>
<comment type="function">
    <text evidence="1">Involved in the catabolism of oxalate and in the adapatation to low pH via the induction of the oxalate-dependent acid tolerance response (ATR). Catalyzes the transfer of the CoA moiety from formyl-CoA to oxalate (By similarity).</text>
</comment>
<comment type="catalytic activity">
    <reaction evidence="2">
        <text>formyl-CoA + oxalate = oxalyl-CoA + formate</text>
        <dbReference type="Rhea" id="RHEA:16545"/>
        <dbReference type="ChEBI" id="CHEBI:15740"/>
        <dbReference type="ChEBI" id="CHEBI:30623"/>
        <dbReference type="ChEBI" id="CHEBI:57376"/>
        <dbReference type="ChEBI" id="CHEBI:57388"/>
        <dbReference type="EC" id="2.8.3.16"/>
    </reaction>
</comment>
<comment type="pathway">
    <text evidence="2">Metabolic intermediate degradation; oxalate degradation; CO(2) and formate from oxalate: step 1/2.</text>
</comment>
<comment type="subunit">
    <text evidence="2">Homodimer.</text>
</comment>
<comment type="similarity">
    <text evidence="2">Belongs to the CoA-transferase III family. Frc subfamily.</text>
</comment>
<evidence type="ECO:0000250" key="1"/>
<evidence type="ECO:0000255" key="2">
    <source>
        <dbReference type="HAMAP-Rule" id="MF_00742"/>
    </source>
</evidence>
<gene>
    <name evidence="2" type="primary">frc</name>
    <name type="ordered locus">Rpal_2155</name>
</gene>
<proteinExistence type="inferred from homology"/>
<keyword id="KW-0808">Transferase</keyword>
<accession>B3QBS6</accession>
<reference key="1">
    <citation type="submission" date="2008-05" db="EMBL/GenBank/DDBJ databases">
        <title>Complete sequence of Rhodopseudomonas palustris TIE-1.</title>
        <authorList>
            <consortium name="US DOE Joint Genome Institute"/>
            <person name="Lucas S."/>
            <person name="Copeland A."/>
            <person name="Lapidus A."/>
            <person name="Glavina del Rio T."/>
            <person name="Dalin E."/>
            <person name="Tice H."/>
            <person name="Pitluck S."/>
            <person name="Chain P."/>
            <person name="Malfatti S."/>
            <person name="Shin M."/>
            <person name="Vergez L."/>
            <person name="Lang D."/>
            <person name="Schmutz J."/>
            <person name="Larimer F."/>
            <person name="Land M."/>
            <person name="Hauser L."/>
            <person name="Kyrpides N."/>
            <person name="Mikhailova N."/>
            <person name="Emerson D."/>
            <person name="Newman D.K."/>
            <person name="Roden E."/>
            <person name="Richardson P."/>
        </authorList>
    </citation>
    <scope>NUCLEOTIDE SEQUENCE [LARGE SCALE GENOMIC DNA]</scope>
    <source>
        <strain>TIE-1</strain>
    </source>
</reference>
<sequence length="425" mass="46512">MTKALDGVRVLDFTHVQSGPTCTQLLAWFGADVIKVERPGSGDITRGQLQDIPKVDSLYFTMLNHNKRSITLDTKNPKGKEVLTALIRTCDVLVENFGPGVLDRMGFTWEKIQEINPRMIVASIKGFGPGPYEDCKVYENVAQCTGGAASTTGFREGLPLVTGAQIGDSGTGLHLALGIVTALYQRHHTGRGQRVTAAMQDGVLNLCRVKLRDQQRLDHGPLKEYSQFGEGIPFGDAVPRAGNDSGGGQPGRILKCKGWEQDPNAYIYVITQAPVWEKICDVIGETGWKMHPDYATPPARLSRLNEIFARIEQWTMTKTKFEAMEILNADDIPCGPILSMKELAEDQSLRATGTIVEVDHPTRGKYLSVGNPIKLSDSPTEVKRSPLLGEHTDEILRDVLGYSDAHVAEIHDSGATAPPRKQAAE</sequence>
<organism>
    <name type="scientific">Rhodopseudomonas palustris (strain TIE-1)</name>
    <dbReference type="NCBI Taxonomy" id="395960"/>
    <lineage>
        <taxon>Bacteria</taxon>
        <taxon>Pseudomonadati</taxon>
        <taxon>Pseudomonadota</taxon>
        <taxon>Alphaproteobacteria</taxon>
        <taxon>Hyphomicrobiales</taxon>
        <taxon>Nitrobacteraceae</taxon>
        <taxon>Rhodopseudomonas</taxon>
    </lineage>
</organism>
<name>FCTA_RHOPT</name>
<feature type="chain" id="PRO_1000189583" description="Formyl-CoA:oxalate CoA-transferase">
    <location>
        <begin position="1"/>
        <end position="425"/>
    </location>
</feature>
<feature type="active site" description="Nucleophile" evidence="2">
    <location>
        <position position="168"/>
    </location>
</feature>
<feature type="binding site" evidence="1">
    <location>
        <begin position="17"/>
        <end position="18"/>
    </location>
    <ligand>
        <name>CoA</name>
        <dbReference type="ChEBI" id="CHEBI:57287"/>
    </ligand>
</feature>
<feature type="binding site" evidence="2">
    <location>
        <position position="38"/>
    </location>
    <ligand>
        <name>CoA</name>
        <dbReference type="ChEBI" id="CHEBI:57287"/>
    </ligand>
</feature>
<feature type="binding site" evidence="1">
    <location>
        <begin position="72"/>
        <end position="75"/>
    </location>
    <ligand>
        <name>CoA</name>
        <dbReference type="ChEBI" id="CHEBI:57287"/>
    </ligand>
</feature>
<feature type="binding site" evidence="1">
    <location>
        <begin position="96"/>
        <end position="98"/>
    </location>
    <ligand>
        <name>CoA</name>
        <dbReference type="ChEBI" id="CHEBI:57287"/>
    </ligand>
</feature>
<feature type="binding site" evidence="2">
    <location>
        <position position="104"/>
    </location>
    <ligand>
        <name>CoA</name>
        <dbReference type="ChEBI" id="CHEBI:57287"/>
    </ligand>
</feature>
<feature type="binding site" evidence="1">
    <location>
        <begin position="136"/>
        <end position="139"/>
    </location>
    <ligand>
        <name>CoA</name>
        <dbReference type="ChEBI" id="CHEBI:57287"/>
    </ligand>
</feature>
<feature type="binding site" evidence="1">
    <location>
        <begin position="247"/>
        <end position="249"/>
    </location>
    <ligand>
        <name>substrate</name>
    </ligand>
</feature>
<dbReference type="EC" id="2.8.3.16" evidence="2"/>
<dbReference type="EMBL" id="CP001096">
    <property type="protein sequence ID" value="ACF00676.1"/>
    <property type="molecule type" value="Genomic_DNA"/>
</dbReference>
<dbReference type="RefSeq" id="WP_012495477.1">
    <property type="nucleotide sequence ID" value="NC_011004.1"/>
</dbReference>
<dbReference type="SMR" id="B3QBS6"/>
<dbReference type="KEGG" id="rpt:Rpal_2155"/>
<dbReference type="HOGENOM" id="CLU_033975_2_1_5"/>
<dbReference type="OrthoDB" id="9806585at2"/>
<dbReference type="UniPathway" id="UPA00540">
    <property type="reaction ID" value="UER00598"/>
</dbReference>
<dbReference type="Proteomes" id="UP000001725">
    <property type="component" value="Chromosome"/>
</dbReference>
<dbReference type="GO" id="GO:0033608">
    <property type="term" value="F:formyl-CoA transferase activity"/>
    <property type="evidence" value="ECO:0007669"/>
    <property type="project" value="UniProtKB-EC"/>
</dbReference>
<dbReference type="GO" id="GO:0033611">
    <property type="term" value="P:oxalate catabolic process"/>
    <property type="evidence" value="ECO:0007669"/>
    <property type="project" value="UniProtKB-UniRule"/>
</dbReference>
<dbReference type="Gene3D" id="3.40.50.10540">
    <property type="entry name" value="Crotonobetainyl-coa:carnitine coa-transferase, domain 1"/>
    <property type="match status" value="1"/>
</dbReference>
<dbReference type="Gene3D" id="3.30.1540.10">
    <property type="entry name" value="formyl-coa transferase, domain 3"/>
    <property type="match status" value="1"/>
</dbReference>
<dbReference type="HAMAP" id="MF_00742">
    <property type="entry name" value="Formyl_CoA_transfer"/>
    <property type="match status" value="1"/>
</dbReference>
<dbReference type="InterPro" id="IPR050483">
    <property type="entry name" value="CoA-transferase_III_domain"/>
</dbReference>
<dbReference type="InterPro" id="IPR003673">
    <property type="entry name" value="CoA-Trfase_fam_III"/>
</dbReference>
<dbReference type="InterPro" id="IPR044855">
    <property type="entry name" value="CoA-Trfase_III_dom3_sf"/>
</dbReference>
<dbReference type="InterPro" id="IPR023606">
    <property type="entry name" value="CoA-Trfase_III_dom_1_sf"/>
</dbReference>
<dbReference type="InterPro" id="IPR017659">
    <property type="entry name" value="Formyl_CoA_transfer"/>
</dbReference>
<dbReference type="NCBIfam" id="TIGR03253">
    <property type="entry name" value="oxalate_frc"/>
    <property type="match status" value="1"/>
</dbReference>
<dbReference type="NCBIfam" id="NF003809">
    <property type="entry name" value="PRK05398.1"/>
    <property type="match status" value="1"/>
</dbReference>
<dbReference type="PANTHER" id="PTHR48207">
    <property type="entry name" value="SUCCINATE--HYDROXYMETHYLGLUTARATE COA-TRANSFERASE"/>
    <property type="match status" value="1"/>
</dbReference>
<dbReference type="PANTHER" id="PTHR48207:SF3">
    <property type="entry name" value="SUCCINATE--HYDROXYMETHYLGLUTARATE COA-TRANSFERASE"/>
    <property type="match status" value="1"/>
</dbReference>
<dbReference type="Pfam" id="PF02515">
    <property type="entry name" value="CoA_transf_3"/>
    <property type="match status" value="1"/>
</dbReference>
<dbReference type="SUPFAM" id="SSF89796">
    <property type="entry name" value="CoA-transferase family III (CaiB/BaiF)"/>
    <property type="match status" value="1"/>
</dbReference>